<feature type="chain" id="PRO_0000158224" description="Histidine biosynthesis bifunctional protein HisB">
    <location>
        <begin position="1"/>
        <end position="357"/>
    </location>
</feature>
<feature type="region of interest" description="Histidinol-phosphatase" evidence="1">
    <location>
        <begin position="1"/>
        <end position="168"/>
    </location>
</feature>
<feature type="region of interest" description="Imidazoleglycerol-phosphate dehydratase" evidence="1">
    <location>
        <begin position="169"/>
        <end position="357"/>
    </location>
</feature>
<feature type="active site" description="Nucleophile" evidence="1">
    <location>
        <position position="11"/>
    </location>
</feature>
<feature type="active site" description="Proton donor" evidence="1">
    <location>
        <position position="13"/>
    </location>
</feature>
<feature type="binding site" evidence="1">
    <location>
        <position position="11"/>
    </location>
    <ligand>
        <name>Mg(2+)</name>
        <dbReference type="ChEBI" id="CHEBI:18420"/>
    </ligand>
</feature>
<feature type="binding site" evidence="1">
    <location>
        <position position="13"/>
    </location>
    <ligand>
        <name>Mg(2+)</name>
        <dbReference type="ChEBI" id="CHEBI:18420"/>
    </ligand>
</feature>
<feature type="binding site" evidence="1">
    <location>
        <position position="95"/>
    </location>
    <ligand>
        <name>Zn(2+)</name>
        <dbReference type="ChEBI" id="CHEBI:29105"/>
    </ligand>
</feature>
<feature type="binding site" evidence="1">
    <location>
        <position position="97"/>
    </location>
    <ligand>
        <name>Zn(2+)</name>
        <dbReference type="ChEBI" id="CHEBI:29105"/>
    </ligand>
</feature>
<feature type="binding site" evidence="1">
    <location>
        <position position="103"/>
    </location>
    <ligand>
        <name>Zn(2+)</name>
        <dbReference type="ChEBI" id="CHEBI:29105"/>
    </ligand>
</feature>
<feature type="binding site" evidence="1">
    <location>
        <position position="105"/>
    </location>
    <ligand>
        <name>Zn(2+)</name>
        <dbReference type="ChEBI" id="CHEBI:29105"/>
    </ligand>
</feature>
<feature type="binding site" evidence="1">
    <location>
        <position position="132"/>
    </location>
    <ligand>
        <name>Mg(2+)</name>
        <dbReference type="ChEBI" id="CHEBI:18420"/>
    </ligand>
</feature>
<sequence>MSKQQKILFIDRDGTLIVEPPIDFQVDRLDKLKLEPFVIPSLLSLQDAGYRLVMVTNQDGLGTDSYPQEDFDAPHNMMMEIFESQGVKFDDVLICPHFEEDNCSCRKPKLGMVKEYLQGGKVDFQNSVVIGDRQTDLQLAENMAIRGIQYNPETMGWKQILKDLTVKARVAEVIRTTKETDIKVAVNLDEQGGNDISTGLGFFDHMLDQIATHGGFQMVCKVDGDLHIDDHHTIEDTALALGQALKEALGDKRGIGRFGFSLPMDECLAQCALDLSGRPYLKFDAKFSRDQVGDLSTEMVVHFFRSLTDTLACTLHLSSAGDNDHHIIESLFKAFGRTLRQAIKVEGTELPSSKGVL</sequence>
<organism>
    <name type="scientific">Vibrio parahaemolyticus serotype O3:K6 (strain RIMD 2210633)</name>
    <dbReference type="NCBI Taxonomy" id="223926"/>
    <lineage>
        <taxon>Bacteria</taxon>
        <taxon>Pseudomonadati</taxon>
        <taxon>Pseudomonadota</taxon>
        <taxon>Gammaproteobacteria</taxon>
        <taxon>Vibrionales</taxon>
        <taxon>Vibrionaceae</taxon>
        <taxon>Vibrio</taxon>
    </lineage>
</organism>
<comment type="catalytic activity">
    <reaction evidence="1">
        <text>D-erythro-1-(imidazol-4-yl)glycerol 3-phosphate = 3-(imidazol-4-yl)-2-oxopropyl phosphate + H2O</text>
        <dbReference type="Rhea" id="RHEA:11040"/>
        <dbReference type="ChEBI" id="CHEBI:15377"/>
        <dbReference type="ChEBI" id="CHEBI:57766"/>
        <dbReference type="ChEBI" id="CHEBI:58278"/>
        <dbReference type="EC" id="4.2.1.19"/>
    </reaction>
</comment>
<comment type="catalytic activity">
    <reaction evidence="1">
        <text>L-histidinol phosphate + H2O = L-histidinol + phosphate</text>
        <dbReference type="Rhea" id="RHEA:14465"/>
        <dbReference type="ChEBI" id="CHEBI:15377"/>
        <dbReference type="ChEBI" id="CHEBI:43474"/>
        <dbReference type="ChEBI" id="CHEBI:57699"/>
        <dbReference type="ChEBI" id="CHEBI:57980"/>
        <dbReference type="EC" id="3.1.3.15"/>
    </reaction>
</comment>
<comment type="cofactor">
    <cofactor evidence="1">
        <name>Mg(2+)</name>
        <dbReference type="ChEBI" id="CHEBI:18420"/>
    </cofactor>
</comment>
<comment type="cofactor">
    <cofactor evidence="1">
        <name>Zn(2+)</name>
        <dbReference type="ChEBI" id="CHEBI:29105"/>
    </cofactor>
</comment>
<comment type="pathway">
    <text evidence="1">Amino-acid biosynthesis; L-histidine biosynthesis; L-histidine from 5-phospho-alpha-D-ribose 1-diphosphate: step 6/9.</text>
</comment>
<comment type="pathway">
    <text evidence="1">Amino-acid biosynthesis; L-histidine biosynthesis; L-histidine from 5-phospho-alpha-D-ribose 1-diphosphate: step 8/9.</text>
</comment>
<comment type="subcellular location">
    <subcellularLocation>
        <location evidence="1">Cytoplasm</location>
    </subcellularLocation>
</comment>
<comment type="similarity">
    <text evidence="1">In the N-terminal section; belongs to the histidinol-phosphatase family.</text>
</comment>
<comment type="similarity">
    <text evidence="1">In the C-terminal section; belongs to the imidazoleglycerol-phosphate dehydratase family.</text>
</comment>
<gene>
    <name evidence="1" type="primary">hisB</name>
    <name type="ordered locus">VP1140</name>
</gene>
<accession>Q87QK9</accession>
<dbReference type="EC" id="3.1.3.15" evidence="1"/>
<dbReference type="EC" id="4.2.1.19" evidence="1"/>
<dbReference type="EMBL" id="BA000031">
    <property type="protein sequence ID" value="BAC59403.1"/>
    <property type="molecule type" value="Genomic_DNA"/>
</dbReference>
<dbReference type="RefSeq" id="NP_797519.1">
    <property type="nucleotide sequence ID" value="NC_004603.1"/>
</dbReference>
<dbReference type="RefSeq" id="WP_005460048.1">
    <property type="nucleotide sequence ID" value="NC_004603.1"/>
</dbReference>
<dbReference type="SMR" id="Q87QK9"/>
<dbReference type="GeneID" id="1188645"/>
<dbReference type="KEGG" id="vpa:VP1140"/>
<dbReference type="PATRIC" id="fig|223926.6.peg.1082"/>
<dbReference type="eggNOG" id="COG0131">
    <property type="taxonomic scope" value="Bacteria"/>
</dbReference>
<dbReference type="eggNOG" id="COG0241">
    <property type="taxonomic scope" value="Bacteria"/>
</dbReference>
<dbReference type="HOGENOM" id="CLU_044308_0_0_6"/>
<dbReference type="UniPathway" id="UPA00031">
    <property type="reaction ID" value="UER00011"/>
</dbReference>
<dbReference type="UniPathway" id="UPA00031">
    <property type="reaction ID" value="UER00013"/>
</dbReference>
<dbReference type="Proteomes" id="UP000002493">
    <property type="component" value="Chromosome 1"/>
</dbReference>
<dbReference type="GO" id="GO:0005737">
    <property type="term" value="C:cytoplasm"/>
    <property type="evidence" value="ECO:0007669"/>
    <property type="project" value="UniProtKB-SubCell"/>
</dbReference>
<dbReference type="GO" id="GO:0004401">
    <property type="term" value="F:histidinol-phosphatase activity"/>
    <property type="evidence" value="ECO:0007669"/>
    <property type="project" value="UniProtKB-UniRule"/>
</dbReference>
<dbReference type="GO" id="GO:0004424">
    <property type="term" value="F:imidazoleglycerol-phosphate dehydratase activity"/>
    <property type="evidence" value="ECO:0007669"/>
    <property type="project" value="UniProtKB-UniRule"/>
</dbReference>
<dbReference type="GO" id="GO:0046872">
    <property type="term" value="F:metal ion binding"/>
    <property type="evidence" value="ECO:0007669"/>
    <property type="project" value="UniProtKB-KW"/>
</dbReference>
<dbReference type="GO" id="GO:0000105">
    <property type="term" value="P:L-histidine biosynthetic process"/>
    <property type="evidence" value="ECO:0007669"/>
    <property type="project" value="UniProtKB-UniRule"/>
</dbReference>
<dbReference type="CDD" id="cd07503">
    <property type="entry name" value="HAD_HisB-N"/>
    <property type="match status" value="1"/>
</dbReference>
<dbReference type="CDD" id="cd07914">
    <property type="entry name" value="IGPD"/>
    <property type="match status" value="1"/>
</dbReference>
<dbReference type="FunFam" id="3.40.50.1000:FF:000061">
    <property type="entry name" value="Histidine biosynthesis bifunctional protein HisB"/>
    <property type="match status" value="1"/>
</dbReference>
<dbReference type="FunFam" id="3.30.230.40:FF:000001">
    <property type="entry name" value="Imidazoleglycerol-phosphate dehydratase HisB"/>
    <property type="match status" value="1"/>
</dbReference>
<dbReference type="FunFam" id="3.30.230.40:FF:000003">
    <property type="entry name" value="Imidazoleglycerol-phosphate dehydratase HisB"/>
    <property type="match status" value="1"/>
</dbReference>
<dbReference type="Gene3D" id="3.40.50.1000">
    <property type="entry name" value="HAD superfamily/HAD-like"/>
    <property type="match status" value="1"/>
</dbReference>
<dbReference type="Gene3D" id="3.30.230.40">
    <property type="entry name" value="Imidazole glycerol phosphate dehydratase, domain 1"/>
    <property type="match status" value="2"/>
</dbReference>
<dbReference type="HAMAP" id="MF_01022">
    <property type="entry name" value="Bifunc_HisB"/>
    <property type="match status" value="1"/>
</dbReference>
<dbReference type="HAMAP" id="MF_00076">
    <property type="entry name" value="HisB"/>
    <property type="match status" value="1"/>
</dbReference>
<dbReference type="InterPro" id="IPR036412">
    <property type="entry name" value="HAD-like_sf"/>
</dbReference>
<dbReference type="InterPro" id="IPR006549">
    <property type="entry name" value="HAD-SF_hydro_IIIA"/>
</dbReference>
<dbReference type="InterPro" id="IPR023214">
    <property type="entry name" value="HAD_sf"/>
</dbReference>
<dbReference type="InterPro" id="IPR020566">
    <property type="entry name" value="His_synth_bifunc_HisB"/>
</dbReference>
<dbReference type="InterPro" id="IPR005954">
    <property type="entry name" value="HisB_N"/>
</dbReference>
<dbReference type="InterPro" id="IPR006543">
    <property type="entry name" value="Histidinol-phos"/>
</dbReference>
<dbReference type="InterPro" id="IPR038494">
    <property type="entry name" value="IGPD_sf"/>
</dbReference>
<dbReference type="InterPro" id="IPR000807">
    <property type="entry name" value="ImidazoleglycerolP_deHydtase"/>
</dbReference>
<dbReference type="InterPro" id="IPR020565">
    <property type="entry name" value="ImidazoleglycerP_deHydtase_CS"/>
</dbReference>
<dbReference type="InterPro" id="IPR013954">
    <property type="entry name" value="PNK3P"/>
</dbReference>
<dbReference type="InterPro" id="IPR020568">
    <property type="entry name" value="Ribosomal_Su5_D2-typ_SF"/>
</dbReference>
<dbReference type="NCBIfam" id="TIGR01662">
    <property type="entry name" value="HAD-SF-IIIA"/>
    <property type="match status" value="1"/>
</dbReference>
<dbReference type="NCBIfam" id="TIGR01261">
    <property type="entry name" value="hisB_Nterm"/>
    <property type="match status" value="1"/>
</dbReference>
<dbReference type="NCBIfam" id="TIGR01656">
    <property type="entry name" value="Histidinol-ppas"/>
    <property type="match status" value="1"/>
</dbReference>
<dbReference type="NCBIfam" id="NF002111">
    <property type="entry name" value="PRK00951.2-1"/>
    <property type="match status" value="1"/>
</dbReference>
<dbReference type="NCBIfam" id="NF002114">
    <property type="entry name" value="PRK00951.2-4"/>
    <property type="match status" value="1"/>
</dbReference>
<dbReference type="NCBIfam" id="NF003937">
    <property type="entry name" value="PRK05446.1"/>
    <property type="match status" value="1"/>
</dbReference>
<dbReference type="PANTHER" id="PTHR23133:SF2">
    <property type="entry name" value="IMIDAZOLEGLYCEROL-PHOSPHATE DEHYDRATASE"/>
    <property type="match status" value="1"/>
</dbReference>
<dbReference type="PANTHER" id="PTHR23133">
    <property type="entry name" value="IMIDAZOLEGLYCEROL-PHOSPHATE DEHYDRATASE HIS7"/>
    <property type="match status" value="1"/>
</dbReference>
<dbReference type="Pfam" id="PF00475">
    <property type="entry name" value="IGPD"/>
    <property type="match status" value="1"/>
</dbReference>
<dbReference type="Pfam" id="PF08645">
    <property type="entry name" value="PNK3P"/>
    <property type="match status" value="1"/>
</dbReference>
<dbReference type="SUPFAM" id="SSF56784">
    <property type="entry name" value="HAD-like"/>
    <property type="match status" value="1"/>
</dbReference>
<dbReference type="SUPFAM" id="SSF54211">
    <property type="entry name" value="Ribosomal protein S5 domain 2-like"/>
    <property type="match status" value="2"/>
</dbReference>
<dbReference type="PROSITE" id="PS00954">
    <property type="entry name" value="IGP_DEHYDRATASE_1"/>
    <property type="match status" value="1"/>
</dbReference>
<dbReference type="PROSITE" id="PS00955">
    <property type="entry name" value="IGP_DEHYDRATASE_2"/>
    <property type="match status" value="1"/>
</dbReference>
<protein>
    <recommendedName>
        <fullName evidence="1">Histidine biosynthesis bifunctional protein HisB</fullName>
    </recommendedName>
    <domain>
        <recommendedName>
            <fullName evidence="1">Histidinol-phosphatase</fullName>
            <ecNumber evidence="1">3.1.3.15</ecNumber>
        </recommendedName>
    </domain>
    <domain>
        <recommendedName>
            <fullName evidence="1">Imidazoleglycerol-phosphate dehydratase</fullName>
            <shortName evidence="1">IGPD</shortName>
            <ecNumber evidence="1">4.2.1.19</ecNumber>
        </recommendedName>
    </domain>
</protein>
<proteinExistence type="inferred from homology"/>
<name>HIS7_VIBPA</name>
<keyword id="KW-0028">Amino-acid biosynthesis</keyword>
<keyword id="KW-0963">Cytoplasm</keyword>
<keyword id="KW-0368">Histidine biosynthesis</keyword>
<keyword id="KW-0378">Hydrolase</keyword>
<keyword id="KW-0456">Lyase</keyword>
<keyword id="KW-0460">Magnesium</keyword>
<keyword id="KW-0479">Metal-binding</keyword>
<keyword id="KW-0511">Multifunctional enzyme</keyword>
<keyword id="KW-0862">Zinc</keyword>
<reference key="1">
    <citation type="journal article" date="2003" name="Lancet">
        <title>Genome sequence of Vibrio parahaemolyticus: a pathogenic mechanism distinct from that of V. cholerae.</title>
        <authorList>
            <person name="Makino K."/>
            <person name="Oshima K."/>
            <person name="Kurokawa K."/>
            <person name="Yokoyama K."/>
            <person name="Uda T."/>
            <person name="Tagomori K."/>
            <person name="Iijima Y."/>
            <person name="Najima M."/>
            <person name="Nakano M."/>
            <person name="Yamashita A."/>
            <person name="Kubota Y."/>
            <person name="Kimura S."/>
            <person name="Yasunaga T."/>
            <person name="Honda T."/>
            <person name="Shinagawa H."/>
            <person name="Hattori M."/>
            <person name="Iida T."/>
        </authorList>
    </citation>
    <scope>NUCLEOTIDE SEQUENCE [LARGE SCALE GENOMIC DNA]</scope>
    <source>
        <strain>RIMD 2210633</strain>
    </source>
</reference>
<evidence type="ECO:0000255" key="1">
    <source>
        <dbReference type="HAMAP-Rule" id="MF_01022"/>
    </source>
</evidence>